<gene>
    <name evidence="1" type="primary">rpsG</name>
    <name evidence="1" type="synonym">rps7</name>
    <name type="ordered locus">P9211_16331</name>
</gene>
<organism>
    <name type="scientific">Prochlorococcus marinus (strain MIT 9211)</name>
    <dbReference type="NCBI Taxonomy" id="93059"/>
    <lineage>
        <taxon>Bacteria</taxon>
        <taxon>Bacillati</taxon>
        <taxon>Cyanobacteriota</taxon>
        <taxon>Cyanophyceae</taxon>
        <taxon>Synechococcales</taxon>
        <taxon>Prochlorococcaceae</taxon>
        <taxon>Prochlorococcus</taxon>
    </lineage>
</organism>
<feature type="chain" id="PRO_0000344301" description="Small ribosomal subunit protein uS7">
    <location>
        <begin position="1"/>
        <end position="156"/>
    </location>
</feature>
<sequence length="156" mass="17597">MSRRNAAEKRPVLPDPQFNNRLATMMVARLMKHGKKSTAQRILSDAFGLINERTGSDPIELFETAVKNATPLVEVRARRVGGATYQVPMEVRQERGTAMALRWLVNFSRSRNGRSMAHKLAGELMDAANEAGNAVRKREETHKMAEANKAFAHYRY</sequence>
<proteinExistence type="inferred from homology"/>
<dbReference type="EMBL" id="CP000878">
    <property type="protein sequence ID" value="ABX09564.1"/>
    <property type="molecule type" value="Genomic_DNA"/>
</dbReference>
<dbReference type="RefSeq" id="WP_012196185.1">
    <property type="nucleotide sequence ID" value="NC_009976.1"/>
</dbReference>
<dbReference type="SMR" id="A9BCK2"/>
<dbReference type="STRING" id="93059.P9211_16331"/>
<dbReference type="KEGG" id="pmj:P9211_16331"/>
<dbReference type="eggNOG" id="COG0049">
    <property type="taxonomic scope" value="Bacteria"/>
</dbReference>
<dbReference type="HOGENOM" id="CLU_072226_1_1_3"/>
<dbReference type="OrthoDB" id="9807653at2"/>
<dbReference type="Proteomes" id="UP000000788">
    <property type="component" value="Chromosome"/>
</dbReference>
<dbReference type="GO" id="GO:0015935">
    <property type="term" value="C:small ribosomal subunit"/>
    <property type="evidence" value="ECO:0007669"/>
    <property type="project" value="InterPro"/>
</dbReference>
<dbReference type="GO" id="GO:0019843">
    <property type="term" value="F:rRNA binding"/>
    <property type="evidence" value="ECO:0007669"/>
    <property type="project" value="UniProtKB-UniRule"/>
</dbReference>
<dbReference type="GO" id="GO:0003735">
    <property type="term" value="F:structural constituent of ribosome"/>
    <property type="evidence" value="ECO:0007669"/>
    <property type="project" value="InterPro"/>
</dbReference>
<dbReference type="GO" id="GO:0000049">
    <property type="term" value="F:tRNA binding"/>
    <property type="evidence" value="ECO:0007669"/>
    <property type="project" value="UniProtKB-UniRule"/>
</dbReference>
<dbReference type="GO" id="GO:0006412">
    <property type="term" value="P:translation"/>
    <property type="evidence" value="ECO:0007669"/>
    <property type="project" value="UniProtKB-UniRule"/>
</dbReference>
<dbReference type="CDD" id="cd14871">
    <property type="entry name" value="uS7_Chloroplast"/>
    <property type="match status" value="1"/>
</dbReference>
<dbReference type="FunFam" id="1.10.455.10:FF:000001">
    <property type="entry name" value="30S ribosomal protein S7"/>
    <property type="match status" value="1"/>
</dbReference>
<dbReference type="Gene3D" id="1.10.455.10">
    <property type="entry name" value="Ribosomal protein S7 domain"/>
    <property type="match status" value="1"/>
</dbReference>
<dbReference type="HAMAP" id="MF_00480_B">
    <property type="entry name" value="Ribosomal_uS7_B"/>
    <property type="match status" value="1"/>
</dbReference>
<dbReference type="InterPro" id="IPR000235">
    <property type="entry name" value="Ribosomal_uS7"/>
</dbReference>
<dbReference type="InterPro" id="IPR005717">
    <property type="entry name" value="Ribosomal_uS7_bac/org-type"/>
</dbReference>
<dbReference type="InterPro" id="IPR020606">
    <property type="entry name" value="Ribosomal_uS7_CS"/>
</dbReference>
<dbReference type="InterPro" id="IPR023798">
    <property type="entry name" value="Ribosomal_uS7_dom"/>
</dbReference>
<dbReference type="InterPro" id="IPR036823">
    <property type="entry name" value="Ribosomal_uS7_dom_sf"/>
</dbReference>
<dbReference type="NCBIfam" id="TIGR01029">
    <property type="entry name" value="rpsG_bact"/>
    <property type="match status" value="1"/>
</dbReference>
<dbReference type="PANTHER" id="PTHR11205">
    <property type="entry name" value="RIBOSOMAL PROTEIN S7"/>
    <property type="match status" value="1"/>
</dbReference>
<dbReference type="Pfam" id="PF00177">
    <property type="entry name" value="Ribosomal_S7"/>
    <property type="match status" value="1"/>
</dbReference>
<dbReference type="PIRSF" id="PIRSF002122">
    <property type="entry name" value="RPS7p_RPS7a_RPS5e_RPS7o"/>
    <property type="match status" value="1"/>
</dbReference>
<dbReference type="SUPFAM" id="SSF47973">
    <property type="entry name" value="Ribosomal protein S7"/>
    <property type="match status" value="1"/>
</dbReference>
<dbReference type="PROSITE" id="PS00052">
    <property type="entry name" value="RIBOSOMAL_S7"/>
    <property type="match status" value="1"/>
</dbReference>
<keyword id="KW-1185">Reference proteome</keyword>
<keyword id="KW-0687">Ribonucleoprotein</keyword>
<keyword id="KW-0689">Ribosomal protein</keyword>
<keyword id="KW-0694">RNA-binding</keyword>
<keyword id="KW-0699">rRNA-binding</keyword>
<keyword id="KW-0820">tRNA-binding</keyword>
<name>RS7_PROM4</name>
<protein>
    <recommendedName>
        <fullName evidence="1">Small ribosomal subunit protein uS7</fullName>
    </recommendedName>
    <alternativeName>
        <fullName evidence="2">30S ribosomal protein S7</fullName>
    </alternativeName>
</protein>
<reference key="1">
    <citation type="journal article" date="2007" name="PLoS Genet.">
        <title>Patterns and implications of gene gain and loss in the evolution of Prochlorococcus.</title>
        <authorList>
            <person name="Kettler G.C."/>
            <person name="Martiny A.C."/>
            <person name="Huang K."/>
            <person name="Zucker J."/>
            <person name="Coleman M.L."/>
            <person name="Rodrigue S."/>
            <person name="Chen F."/>
            <person name="Lapidus A."/>
            <person name="Ferriera S."/>
            <person name="Johnson J."/>
            <person name="Steglich C."/>
            <person name="Church G.M."/>
            <person name="Richardson P."/>
            <person name="Chisholm S.W."/>
        </authorList>
    </citation>
    <scope>NUCLEOTIDE SEQUENCE [LARGE SCALE GENOMIC DNA]</scope>
    <source>
        <strain>MIT 9211</strain>
    </source>
</reference>
<accession>A9BCK2</accession>
<comment type="function">
    <text evidence="1">One of the primary rRNA binding proteins, it binds directly to 16S rRNA where it nucleates assembly of the head domain of the 30S subunit. Is located at the subunit interface close to the decoding center, probably blocks exit of the E-site tRNA.</text>
</comment>
<comment type="subunit">
    <text evidence="1">Part of the 30S ribosomal subunit. Contacts proteins S9 and S11.</text>
</comment>
<comment type="similarity">
    <text evidence="1">Belongs to the universal ribosomal protein uS7 family.</text>
</comment>
<evidence type="ECO:0000255" key="1">
    <source>
        <dbReference type="HAMAP-Rule" id="MF_00480"/>
    </source>
</evidence>
<evidence type="ECO:0000305" key="2"/>